<accession>A5IHQ8</accession>
<sequence>MGQKVNPIGIRLGIIKDWNSKWFAGKRYAEFLIQDIKLRNDLKKKLMAAAVSKILIERPANNAVVTILTARPGVIIGKKGGGIETLRKEISDNLGVPVHLNIEEVKKPELDATLVAEGIAQQLEQRVMFRRAMKRAVTSALKAGAKGIKICVSGRLGGAEIARSEWYREGRVPLHTFRADIDYGTAESKTTYGIIGVKVWIFKGEILPQKKRSTESAQ</sequence>
<evidence type="ECO:0000255" key="1">
    <source>
        <dbReference type="HAMAP-Rule" id="MF_01309"/>
    </source>
</evidence>
<evidence type="ECO:0000305" key="2"/>
<dbReference type="EMBL" id="CP000675">
    <property type="protein sequence ID" value="ABQ56908.1"/>
    <property type="molecule type" value="Genomic_DNA"/>
</dbReference>
<dbReference type="RefSeq" id="WP_010946084.1">
    <property type="nucleotide sequence ID" value="NZ_JAPMSS010000006.1"/>
</dbReference>
<dbReference type="SMR" id="A5IHQ8"/>
<dbReference type="GeneID" id="57034338"/>
<dbReference type="KEGG" id="lpc:LPC_3007"/>
<dbReference type="HOGENOM" id="CLU_058591_0_2_6"/>
<dbReference type="GO" id="GO:0022627">
    <property type="term" value="C:cytosolic small ribosomal subunit"/>
    <property type="evidence" value="ECO:0007669"/>
    <property type="project" value="TreeGrafter"/>
</dbReference>
<dbReference type="GO" id="GO:0003729">
    <property type="term" value="F:mRNA binding"/>
    <property type="evidence" value="ECO:0007669"/>
    <property type="project" value="UniProtKB-UniRule"/>
</dbReference>
<dbReference type="GO" id="GO:0019843">
    <property type="term" value="F:rRNA binding"/>
    <property type="evidence" value="ECO:0007669"/>
    <property type="project" value="UniProtKB-UniRule"/>
</dbReference>
<dbReference type="GO" id="GO:0003735">
    <property type="term" value="F:structural constituent of ribosome"/>
    <property type="evidence" value="ECO:0007669"/>
    <property type="project" value="InterPro"/>
</dbReference>
<dbReference type="GO" id="GO:0006412">
    <property type="term" value="P:translation"/>
    <property type="evidence" value="ECO:0007669"/>
    <property type="project" value="UniProtKB-UniRule"/>
</dbReference>
<dbReference type="CDD" id="cd02412">
    <property type="entry name" value="KH-II_30S_S3"/>
    <property type="match status" value="1"/>
</dbReference>
<dbReference type="FunFam" id="3.30.1140.32:FF:000001">
    <property type="entry name" value="30S ribosomal protein S3"/>
    <property type="match status" value="1"/>
</dbReference>
<dbReference type="FunFam" id="3.30.300.20:FF:000001">
    <property type="entry name" value="30S ribosomal protein S3"/>
    <property type="match status" value="1"/>
</dbReference>
<dbReference type="Gene3D" id="3.30.300.20">
    <property type="match status" value="1"/>
</dbReference>
<dbReference type="Gene3D" id="3.30.1140.32">
    <property type="entry name" value="Ribosomal protein S3, C-terminal domain"/>
    <property type="match status" value="1"/>
</dbReference>
<dbReference type="HAMAP" id="MF_01309_B">
    <property type="entry name" value="Ribosomal_uS3_B"/>
    <property type="match status" value="1"/>
</dbReference>
<dbReference type="InterPro" id="IPR004087">
    <property type="entry name" value="KH_dom"/>
</dbReference>
<dbReference type="InterPro" id="IPR015946">
    <property type="entry name" value="KH_dom-like_a/b"/>
</dbReference>
<dbReference type="InterPro" id="IPR004044">
    <property type="entry name" value="KH_dom_type_2"/>
</dbReference>
<dbReference type="InterPro" id="IPR009019">
    <property type="entry name" value="KH_sf_prok-type"/>
</dbReference>
<dbReference type="InterPro" id="IPR036419">
    <property type="entry name" value="Ribosomal_S3_C_sf"/>
</dbReference>
<dbReference type="InterPro" id="IPR005704">
    <property type="entry name" value="Ribosomal_uS3_bac-typ"/>
</dbReference>
<dbReference type="InterPro" id="IPR001351">
    <property type="entry name" value="Ribosomal_uS3_C"/>
</dbReference>
<dbReference type="InterPro" id="IPR018280">
    <property type="entry name" value="Ribosomal_uS3_CS"/>
</dbReference>
<dbReference type="NCBIfam" id="TIGR01009">
    <property type="entry name" value="rpsC_bact"/>
    <property type="match status" value="1"/>
</dbReference>
<dbReference type="PANTHER" id="PTHR11760">
    <property type="entry name" value="30S/40S RIBOSOMAL PROTEIN S3"/>
    <property type="match status" value="1"/>
</dbReference>
<dbReference type="PANTHER" id="PTHR11760:SF19">
    <property type="entry name" value="SMALL RIBOSOMAL SUBUNIT PROTEIN US3C"/>
    <property type="match status" value="1"/>
</dbReference>
<dbReference type="Pfam" id="PF07650">
    <property type="entry name" value="KH_2"/>
    <property type="match status" value="1"/>
</dbReference>
<dbReference type="Pfam" id="PF00189">
    <property type="entry name" value="Ribosomal_S3_C"/>
    <property type="match status" value="1"/>
</dbReference>
<dbReference type="SMART" id="SM00322">
    <property type="entry name" value="KH"/>
    <property type="match status" value="1"/>
</dbReference>
<dbReference type="SUPFAM" id="SSF54814">
    <property type="entry name" value="Prokaryotic type KH domain (KH-domain type II)"/>
    <property type="match status" value="1"/>
</dbReference>
<dbReference type="SUPFAM" id="SSF54821">
    <property type="entry name" value="Ribosomal protein S3 C-terminal domain"/>
    <property type="match status" value="1"/>
</dbReference>
<dbReference type="PROSITE" id="PS50823">
    <property type="entry name" value="KH_TYPE_2"/>
    <property type="match status" value="1"/>
</dbReference>
<dbReference type="PROSITE" id="PS00548">
    <property type="entry name" value="RIBOSOMAL_S3"/>
    <property type="match status" value="1"/>
</dbReference>
<protein>
    <recommendedName>
        <fullName evidence="1">Small ribosomal subunit protein uS3</fullName>
    </recommendedName>
    <alternativeName>
        <fullName evidence="2">30S ribosomal protein S3</fullName>
    </alternativeName>
</protein>
<gene>
    <name evidence="1" type="primary">rpsC</name>
    <name type="ordered locus">LPC_3007</name>
</gene>
<keyword id="KW-0687">Ribonucleoprotein</keyword>
<keyword id="KW-0689">Ribosomal protein</keyword>
<keyword id="KW-0694">RNA-binding</keyword>
<keyword id="KW-0699">rRNA-binding</keyword>
<comment type="function">
    <text evidence="1">Binds the lower part of the 30S subunit head. Binds mRNA in the 70S ribosome, positioning it for translation.</text>
</comment>
<comment type="subunit">
    <text evidence="1">Part of the 30S ribosomal subunit. Forms a tight complex with proteins S10 and S14.</text>
</comment>
<comment type="similarity">
    <text evidence="1">Belongs to the universal ribosomal protein uS3 family.</text>
</comment>
<organism>
    <name type="scientific">Legionella pneumophila (strain Corby)</name>
    <dbReference type="NCBI Taxonomy" id="400673"/>
    <lineage>
        <taxon>Bacteria</taxon>
        <taxon>Pseudomonadati</taxon>
        <taxon>Pseudomonadota</taxon>
        <taxon>Gammaproteobacteria</taxon>
        <taxon>Legionellales</taxon>
        <taxon>Legionellaceae</taxon>
        <taxon>Legionella</taxon>
    </lineage>
</organism>
<reference key="1">
    <citation type="submission" date="2006-11" db="EMBL/GenBank/DDBJ databases">
        <title>Identification and characterization of a new conjugation/ type IVA secretion system (trb/tra) of L. pneumophila Corby localized on a mobile genomic island.</title>
        <authorList>
            <person name="Gloeckner G."/>
            <person name="Albert-Weissenberger C."/>
            <person name="Weinmann E."/>
            <person name="Jacobi S."/>
            <person name="Schunder E."/>
            <person name="Steinert M."/>
            <person name="Buchrieser C."/>
            <person name="Hacker J."/>
            <person name="Heuner K."/>
        </authorList>
    </citation>
    <scope>NUCLEOTIDE SEQUENCE [LARGE SCALE GENOMIC DNA]</scope>
    <source>
        <strain>Corby</strain>
    </source>
</reference>
<name>RS3_LEGPC</name>
<feature type="chain" id="PRO_1000086131" description="Small ribosomal subunit protein uS3">
    <location>
        <begin position="1"/>
        <end position="218"/>
    </location>
</feature>
<feature type="domain" description="KH type-2" evidence="1">
    <location>
        <begin position="38"/>
        <end position="106"/>
    </location>
</feature>
<proteinExistence type="inferred from homology"/>